<name>NADK_METHJ</name>
<protein>
    <recommendedName>
        <fullName evidence="1">NAD kinase</fullName>
        <ecNumber evidence="1">2.7.1.23</ecNumber>
    </recommendedName>
    <alternativeName>
        <fullName evidence="1">ATP-dependent NAD kinase</fullName>
    </alternativeName>
</protein>
<keyword id="KW-0067">ATP-binding</keyword>
<keyword id="KW-0963">Cytoplasm</keyword>
<keyword id="KW-0418">Kinase</keyword>
<keyword id="KW-0520">NAD</keyword>
<keyword id="KW-0521">NADP</keyword>
<keyword id="KW-0547">Nucleotide-binding</keyword>
<keyword id="KW-1185">Reference proteome</keyword>
<keyword id="KW-0808">Transferase</keyword>
<accession>Q2FQ95</accession>
<dbReference type="EC" id="2.7.1.23" evidence="1"/>
<dbReference type="EMBL" id="CP000254">
    <property type="protein sequence ID" value="ABD40652.1"/>
    <property type="molecule type" value="Genomic_DNA"/>
</dbReference>
<dbReference type="RefSeq" id="WP_011447931.1">
    <property type="nucleotide sequence ID" value="NC_007796.1"/>
</dbReference>
<dbReference type="SMR" id="Q2FQ95"/>
<dbReference type="STRING" id="323259.Mhun_0902"/>
<dbReference type="EnsemblBacteria" id="ABD40652">
    <property type="protein sequence ID" value="ABD40652"/>
    <property type="gene ID" value="Mhun_0902"/>
</dbReference>
<dbReference type="GeneID" id="3923910"/>
<dbReference type="KEGG" id="mhu:Mhun_0902"/>
<dbReference type="eggNOG" id="arCOG01348">
    <property type="taxonomic scope" value="Archaea"/>
</dbReference>
<dbReference type="HOGENOM" id="CLU_008831_0_2_2"/>
<dbReference type="InParanoid" id="Q2FQ95"/>
<dbReference type="OrthoDB" id="77798at2157"/>
<dbReference type="Proteomes" id="UP000001941">
    <property type="component" value="Chromosome"/>
</dbReference>
<dbReference type="GO" id="GO:0005737">
    <property type="term" value="C:cytoplasm"/>
    <property type="evidence" value="ECO:0007669"/>
    <property type="project" value="UniProtKB-SubCell"/>
</dbReference>
<dbReference type="GO" id="GO:0005524">
    <property type="term" value="F:ATP binding"/>
    <property type="evidence" value="ECO:0007669"/>
    <property type="project" value="UniProtKB-KW"/>
</dbReference>
<dbReference type="GO" id="GO:0046872">
    <property type="term" value="F:metal ion binding"/>
    <property type="evidence" value="ECO:0007669"/>
    <property type="project" value="UniProtKB-UniRule"/>
</dbReference>
<dbReference type="GO" id="GO:0003951">
    <property type="term" value="F:NAD+ kinase activity"/>
    <property type="evidence" value="ECO:0007669"/>
    <property type="project" value="UniProtKB-UniRule"/>
</dbReference>
<dbReference type="GO" id="GO:0019674">
    <property type="term" value="P:NAD metabolic process"/>
    <property type="evidence" value="ECO:0007669"/>
    <property type="project" value="InterPro"/>
</dbReference>
<dbReference type="GO" id="GO:0006741">
    <property type="term" value="P:NADP biosynthetic process"/>
    <property type="evidence" value="ECO:0007669"/>
    <property type="project" value="UniProtKB-UniRule"/>
</dbReference>
<dbReference type="Gene3D" id="3.40.50.10330">
    <property type="entry name" value="Probable inorganic polyphosphate/atp-NAD kinase, domain 1"/>
    <property type="match status" value="1"/>
</dbReference>
<dbReference type="Gene3D" id="2.60.200.30">
    <property type="entry name" value="Probable inorganic polyphosphate/atp-NAD kinase, domain 2"/>
    <property type="match status" value="1"/>
</dbReference>
<dbReference type="HAMAP" id="MF_00361">
    <property type="entry name" value="NAD_kinase"/>
    <property type="match status" value="1"/>
</dbReference>
<dbReference type="InterPro" id="IPR017438">
    <property type="entry name" value="ATP-NAD_kinase_N"/>
</dbReference>
<dbReference type="InterPro" id="IPR017437">
    <property type="entry name" value="ATP-NAD_kinase_PpnK-typ_C"/>
</dbReference>
<dbReference type="InterPro" id="IPR016064">
    <property type="entry name" value="NAD/diacylglycerol_kinase_sf"/>
</dbReference>
<dbReference type="InterPro" id="IPR002504">
    <property type="entry name" value="NADK"/>
</dbReference>
<dbReference type="PANTHER" id="PTHR20275:SF43">
    <property type="entry name" value="BIFUNCTIONAL NADP PHOSPHATASE_NAD KINASE"/>
    <property type="match status" value="1"/>
</dbReference>
<dbReference type="PANTHER" id="PTHR20275">
    <property type="entry name" value="NAD KINASE"/>
    <property type="match status" value="1"/>
</dbReference>
<dbReference type="Pfam" id="PF01513">
    <property type="entry name" value="NAD_kinase"/>
    <property type="match status" value="1"/>
</dbReference>
<dbReference type="Pfam" id="PF20143">
    <property type="entry name" value="NAD_kinase_C"/>
    <property type="match status" value="1"/>
</dbReference>
<dbReference type="SUPFAM" id="SSF111331">
    <property type="entry name" value="NAD kinase/diacylglycerol kinase-like"/>
    <property type="match status" value="1"/>
</dbReference>
<reference key="1">
    <citation type="journal article" date="2016" name="Stand. Genomic Sci.">
        <title>Complete genome sequence of Methanospirillum hungatei type strain JF1.</title>
        <authorList>
            <person name="Gunsalus R.P."/>
            <person name="Cook L.E."/>
            <person name="Crable B."/>
            <person name="Rohlin L."/>
            <person name="McDonald E."/>
            <person name="Mouttaki H."/>
            <person name="Sieber J.R."/>
            <person name="Poweleit N."/>
            <person name="Zhou H."/>
            <person name="Lapidus A.L."/>
            <person name="Daligault H.E."/>
            <person name="Land M."/>
            <person name="Gilna P."/>
            <person name="Ivanova N."/>
            <person name="Kyrpides N."/>
            <person name="Culley D.E."/>
            <person name="McInerney M.J."/>
        </authorList>
    </citation>
    <scope>NUCLEOTIDE SEQUENCE [LARGE SCALE GENOMIC DNA]</scope>
    <source>
        <strain>ATCC 27890 / DSM 864 / NBRC 100397 / JF-1</strain>
    </source>
</reference>
<evidence type="ECO:0000255" key="1">
    <source>
        <dbReference type="HAMAP-Rule" id="MF_00361"/>
    </source>
</evidence>
<organism>
    <name type="scientific">Methanospirillum hungatei JF-1 (strain ATCC 27890 / DSM 864 / NBRC 100397 / JF-1)</name>
    <dbReference type="NCBI Taxonomy" id="323259"/>
    <lineage>
        <taxon>Archaea</taxon>
        <taxon>Methanobacteriati</taxon>
        <taxon>Methanobacteriota</taxon>
        <taxon>Stenosarchaea group</taxon>
        <taxon>Methanomicrobia</taxon>
        <taxon>Methanomicrobiales</taxon>
        <taxon>Methanospirillaceae</taxon>
        <taxon>Methanospirillum</taxon>
    </lineage>
</organism>
<feature type="chain" id="PRO_1000059878" description="NAD kinase">
    <location>
        <begin position="1"/>
        <end position="269"/>
    </location>
</feature>
<feature type="active site" description="Proton acceptor" evidence="1">
    <location>
        <position position="62"/>
    </location>
</feature>
<feature type="binding site" evidence="1">
    <location>
        <begin position="62"/>
        <end position="63"/>
    </location>
    <ligand>
        <name>NAD(+)</name>
        <dbReference type="ChEBI" id="CHEBI:57540"/>
    </ligand>
</feature>
<feature type="binding site" evidence="1">
    <location>
        <begin position="130"/>
        <end position="131"/>
    </location>
    <ligand>
        <name>NAD(+)</name>
        <dbReference type="ChEBI" id="CHEBI:57540"/>
    </ligand>
</feature>
<feature type="binding site" evidence="1">
    <location>
        <position position="141"/>
    </location>
    <ligand>
        <name>NAD(+)</name>
        <dbReference type="ChEBI" id="CHEBI:57540"/>
    </ligand>
</feature>
<feature type="binding site" evidence="1">
    <location>
        <position position="158"/>
    </location>
    <ligand>
        <name>NAD(+)</name>
        <dbReference type="ChEBI" id="CHEBI:57540"/>
    </ligand>
</feature>
<feature type="binding site" evidence="1">
    <location>
        <position position="160"/>
    </location>
    <ligand>
        <name>NAD(+)</name>
        <dbReference type="ChEBI" id="CHEBI:57540"/>
    </ligand>
</feature>
<feature type="binding site" evidence="1">
    <location>
        <begin position="171"/>
        <end position="176"/>
    </location>
    <ligand>
        <name>NAD(+)</name>
        <dbReference type="ChEBI" id="CHEBI:57540"/>
    </ligand>
</feature>
<feature type="binding site" evidence="1">
    <location>
        <position position="195"/>
    </location>
    <ligand>
        <name>NAD(+)</name>
        <dbReference type="ChEBI" id="CHEBI:57540"/>
    </ligand>
</feature>
<feature type="binding site" evidence="1">
    <location>
        <position position="229"/>
    </location>
    <ligand>
        <name>NAD(+)</name>
        <dbReference type="ChEBI" id="CHEBI:57540"/>
    </ligand>
</feature>
<proteinExistence type="inferred from homology"/>
<comment type="function">
    <text evidence="1">Involved in the regulation of the intracellular balance of NAD and NADP, and is a key enzyme in the biosynthesis of NADP. Catalyzes specifically the phosphorylation on 2'-hydroxyl of the adenosine moiety of NAD to yield NADP.</text>
</comment>
<comment type="catalytic activity">
    <reaction evidence="1">
        <text>NAD(+) + ATP = ADP + NADP(+) + H(+)</text>
        <dbReference type="Rhea" id="RHEA:18629"/>
        <dbReference type="ChEBI" id="CHEBI:15378"/>
        <dbReference type="ChEBI" id="CHEBI:30616"/>
        <dbReference type="ChEBI" id="CHEBI:57540"/>
        <dbReference type="ChEBI" id="CHEBI:58349"/>
        <dbReference type="ChEBI" id="CHEBI:456216"/>
        <dbReference type="EC" id="2.7.1.23"/>
    </reaction>
</comment>
<comment type="cofactor">
    <cofactor evidence="1">
        <name>a divalent metal cation</name>
        <dbReference type="ChEBI" id="CHEBI:60240"/>
    </cofactor>
</comment>
<comment type="subcellular location">
    <subcellularLocation>
        <location evidence="1">Cytoplasm</location>
    </subcellularLocation>
</comment>
<comment type="similarity">
    <text evidence="1">Belongs to the NAD kinase family.</text>
</comment>
<gene>
    <name evidence="1" type="primary">nadK</name>
    <name type="ordered locus">Mhun_0902</name>
</gene>
<sequence>MNILIVNRYGDPDVEEFSYELEKLLHHHGHHTSIYKENLLGEAPPLFSGEHPPDLVIVIGGDGTILLTTQRMPVQVPIIGINYGEVGFLADIEPEEMSTFVSHLTEPLPLEARMRIELRINGQHIGTALNEALIVTDRPAKMLKFLIHINGNVAERFRADGLIISTPTGSTAYAMSAGGPIVDPRVEGFLMVPLAPFMLSNRPHLIDSSRTVSITLEATKPAKLVIDGQTEIHLETSSTIELSKSPSPALFIDAGQNFFEKINRKLRHL</sequence>